<protein>
    <recommendedName>
        <fullName>Uncharacterized protein A1</fullName>
    </recommendedName>
</protein>
<accession>Q5MAV5</accession>
<reference key="1">
    <citation type="journal article" date="2006" name="Virology">
        <title>Polydnavirus genomes reflect their dual roles as mutualists and pathogens.</title>
        <authorList>
            <person name="Webb B.A."/>
            <person name="Strand M.R."/>
            <person name="Dickey S.E."/>
            <person name="Beck M.H."/>
            <person name="Hilgarth R.S."/>
            <person name="Barney W.E."/>
            <person name="Kadash K."/>
            <person name="Kroemer J.A."/>
            <person name="Lindstrom K.G."/>
            <person name="Rattanadechakul W."/>
            <person name="Shelby K.S."/>
            <person name="Thoetkiattikul H."/>
            <person name="Turnbull M.W."/>
            <person name="Witherell R.A."/>
        </authorList>
    </citation>
    <scope>NUCLEOTIDE SEQUENCE [GENOMIC DNA]</scope>
</reference>
<gene>
    <name type="primary">A1</name>
</gene>
<proteinExistence type="predicted"/>
<organism>
    <name type="scientific">Microplitis demolitor bracovirus (isolate Webb)</name>
    <name type="common">MdBV</name>
    <dbReference type="NCBI Taxonomy" id="654919"/>
    <lineage>
        <taxon>Viruses</taxon>
        <taxon>Viruses incertae sedis</taxon>
        <taxon>Polydnaviriformidae</taxon>
        <taxon>Bracoviriform</taxon>
        <taxon>Microplitis demolitor bracovirus</taxon>
    </lineage>
</organism>
<dbReference type="EMBL" id="AY842013">
    <property type="protein sequence ID" value="AAW24443.1"/>
    <property type="molecule type" value="Genomic_DNA"/>
</dbReference>
<dbReference type="RefSeq" id="YP_239362.1">
    <property type="nucleotide sequence ID" value="NC_007028.1"/>
</dbReference>
<dbReference type="KEGG" id="vg:5075797"/>
<dbReference type="Proteomes" id="UP000008168">
    <property type="component" value="Genome"/>
</dbReference>
<keyword id="KW-1185">Reference proteome</keyword>
<sequence length="172" mass="19605">MALQFIVWKCKSTCQLSQSTGGFRADLTTLNRIPEARLPMTNEASTSFSSTDAITKLNFVTMLQIVKPMIVSLLGYVDTIIEYNQNKSLFNPENYRGENNNSDNLVNFTQMSNTCVTLFQEIMQNYINSHNLKLMSKNSTPNEILSLETNIYKEIMSFLDLTIMMMKGDILK</sequence>
<name>YA1_MDBVW</name>
<organismHost>
    <name type="scientific">Microplitis demolitor</name>
    <name type="common">Parasitoid wasp</name>
    <dbReference type="NCBI Taxonomy" id="69319"/>
</organismHost>
<feature type="chain" id="PRO_0000405378" description="Uncharacterized protein A1">
    <location>
        <begin position="1"/>
        <end position="172"/>
    </location>
</feature>